<sequence>MQSARMTPSVGRQLLRLGARSSRSAALQGQPRPTSAQRLYASEATQAVLEKPETLSSDASTREKPARAESKSFAVGMFKGQLTTDQVFPYPSVLNEGQTQFLKELVGPVARFFEEVNDPAKNDSLEKVEEDTLQGLKELGAFGLQVPSELGGLGLSNTQYARLAEIVGMHDLGVSVTLGAHQSIGFKGILLYGTKAQKEKYLPRVASGQALAAFCLTEPSSGSDVASIRSSAVPSPCGKYYTLNGSKIWISNGGLADIFTVFAKTPIKDAATGAVKEKITAFVVERSFGGVTHGLPEKKMGIKASNTSEVYFDGVKVPAENVLGEVGDGFKVAVNILNNGRFGMAATLAGTMKAIIAKAVDHATNRTQFGDKIHNFGVIQEKLARMAILQYVTESMAYMLSANMDQGFKDFQIEAAISKIFGSEAAWKVTDECIQIMGGMGFMKEPGVERVLRDIRIFRIFEGTNDILRLFVALQGCMDKGKELTGLGNALKNPLGNVGLLIGEASKQLRRRTGIGSGLSLSGIVHPELSRSGELAVQALEQFATVVEAKLMKHKKGIVNEQFLLQRLADGAIDLYAMVVVLSRASRSLSEGYPTAQHEKMLCDSWCIEAATRIRENMASLQSNPQQQELFRNFRSISKAMVENGGLVTSNPLRV</sequence>
<comment type="function">
    <text evidence="4 5">Very long-chain specific acyl-CoA dehydrogenase is one of the acyl-CoA dehydrogenases that catalyze the first step of mitochondrial fatty acid beta-oxidation, an aerobic process breaking down fatty acids into acetyl-CoA and allowing the production of energy from fats (PubMed:1730632, PubMed:8034667). The first step of fatty acid beta-oxidation consists in the removal of one hydrogen from C-2 and C-3 of the straight-chain fatty acyl-CoA thioester, resulting in the formation of trans-2-enoyl-CoA (PubMed:1730632, PubMed:8034667). Among the different mitochondrial acyl-CoA dehydrogenases, very long-chain specific acyl-CoA dehydrogenase acts specifically on acyl-CoAs with saturated 12 to 24 carbons long primary chains (PubMed:1730632).</text>
</comment>
<comment type="catalytic activity">
    <reaction evidence="4 5">
        <text>a very-long-chain 2,3-saturated fatty acyl-CoA + oxidized [electron-transfer flavoprotein] + H(+) = a very-long-chain (2E)-enoyl-CoA + reduced [electron-transfer flavoprotein]</text>
        <dbReference type="Rhea" id="RHEA:19181"/>
        <dbReference type="Rhea" id="RHEA-COMP:10685"/>
        <dbReference type="Rhea" id="RHEA-COMP:10686"/>
        <dbReference type="ChEBI" id="CHEBI:15378"/>
        <dbReference type="ChEBI" id="CHEBI:57692"/>
        <dbReference type="ChEBI" id="CHEBI:58307"/>
        <dbReference type="ChEBI" id="CHEBI:83724"/>
        <dbReference type="ChEBI" id="CHEBI:83728"/>
        <dbReference type="EC" id="1.3.8.9"/>
    </reaction>
    <physiologicalReaction direction="left-to-right" evidence="8">
        <dbReference type="Rhea" id="RHEA:19182"/>
    </physiologicalReaction>
</comment>
<comment type="catalytic activity">
    <reaction evidence="4">
        <text>dodecanoyl-CoA + oxidized [electron-transfer flavoprotein] + H(+) = (2E)-dodecenoyl-CoA + reduced [electron-transfer flavoprotein]</text>
        <dbReference type="Rhea" id="RHEA:47296"/>
        <dbReference type="Rhea" id="RHEA-COMP:10685"/>
        <dbReference type="Rhea" id="RHEA-COMP:10686"/>
        <dbReference type="ChEBI" id="CHEBI:15378"/>
        <dbReference type="ChEBI" id="CHEBI:57330"/>
        <dbReference type="ChEBI" id="CHEBI:57375"/>
        <dbReference type="ChEBI" id="CHEBI:57692"/>
        <dbReference type="ChEBI" id="CHEBI:58307"/>
    </reaction>
    <physiologicalReaction direction="left-to-right" evidence="8">
        <dbReference type="Rhea" id="RHEA:47297"/>
    </physiologicalReaction>
</comment>
<comment type="catalytic activity">
    <reaction evidence="4">
        <text>tetradecanoyl-CoA + oxidized [electron-transfer flavoprotein] + H(+) = (2E)-tetradecenoyl-CoA + reduced [electron-transfer flavoprotein]</text>
        <dbReference type="Rhea" id="RHEA:47316"/>
        <dbReference type="Rhea" id="RHEA-COMP:10685"/>
        <dbReference type="Rhea" id="RHEA-COMP:10686"/>
        <dbReference type="ChEBI" id="CHEBI:15378"/>
        <dbReference type="ChEBI" id="CHEBI:57385"/>
        <dbReference type="ChEBI" id="CHEBI:57692"/>
        <dbReference type="ChEBI" id="CHEBI:58307"/>
        <dbReference type="ChEBI" id="CHEBI:61405"/>
    </reaction>
    <physiologicalReaction direction="left-to-right" evidence="8">
        <dbReference type="Rhea" id="RHEA:47317"/>
    </physiologicalReaction>
</comment>
<comment type="catalytic activity">
    <reaction evidence="4 5">
        <text>oxidized [electron-transfer flavoprotein] + hexadecanoyl-CoA + H(+) = (2E)-hexadecenoyl-CoA + reduced [electron-transfer flavoprotein]</text>
        <dbReference type="Rhea" id="RHEA:43448"/>
        <dbReference type="Rhea" id="RHEA-COMP:10685"/>
        <dbReference type="Rhea" id="RHEA-COMP:10686"/>
        <dbReference type="ChEBI" id="CHEBI:15378"/>
        <dbReference type="ChEBI" id="CHEBI:57379"/>
        <dbReference type="ChEBI" id="CHEBI:57692"/>
        <dbReference type="ChEBI" id="CHEBI:58307"/>
        <dbReference type="ChEBI" id="CHEBI:61526"/>
    </reaction>
    <physiologicalReaction direction="left-to-right" evidence="8">
        <dbReference type="Rhea" id="RHEA:43449"/>
    </physiologicalReaction>
</comment>
<comment type="catalytic activity">
    <reaction evidence="4 5">
        <text>octadecanoyl-CoA + oxidized [electron-transfer flavoprotein] + H(+) = (2E)-octadecenoyl-CoA + reduced [electron-transfer flavoprotein]</text>
        <dbReference type="Rhea" id="RHEA:47240"/>
        <dbReference type="Rhea" id="RHEA-COMP:10685"/>
        <dbReference type="Rhea" id="RHEA-COMP:10686"/>
        <dbReference type="ChEBI" id="CHEBI:15378"/>
        <dbReference type="ChEBI" id="CHEBI:57394"/>
        <dbReference type="ChEBI" id="CHEBI:57692"/>
        <dbReference type="ChEBI" id="CHEBI:58307"/>
        <dbReference type="ChEBI" id="CHEBI:71412"/>
    </reaction>
    <physiologicalReaction direction="left-to-right" evidence="8">
        <dbReference type="Rhea" id="RHEA:47241"/>
    </physiologicalReaction>
</comment>
<comment type="catalytic activity">
    <reaction evidence="4">
        <text>eicosanoyl-CoA + oxidized [electron-transfer flavoprotein] + H(+) = (2E)-eicosenoyl-CoA + reduced [electron-transfer flavoprotein]</text>
        <dbReference type="Rhea" id="RHEA:47236"/>
        <dbReference type="Rhea" id="RHEA-COMP:10685"/>
        <dbReference type="Rhea" id="RHEA-COMP:10686"/>
        <dbReference type="ChEBI" id="CHEBI:15378"/>
        <dbReference type="ChEBI" id="CHEBI:57380"/>
        <dbReference type="ChEBI" id="CHEBI:57692"/>
        <dbReference type="ChEBI" id="CHEBI:58307"/>
        <dbReference type="ChEBI" id="CHEBI:74691"/>
    </reaction>
    <physiologicalReaction direction="left-to-right" evidence="8">
        <dbReference type="Rhea" id="RHEA:47237"/>
    </physiologicalReaction>
</comment>
<comment type="catalytic activity">
    <reaction evidence="4">
        <text>docosanoyl-CoA + oxidized [electron-transfer flavoprotein] + H(+) = (2E)-docosenoyl-CoA + reduced [electron-transfer flavoprotein]</text>
        <dbReference type="Rhea" id="RHEA:47228"/>
        <dbReference type="Rhea" id="RHEA-COMP:10685"/>
        <dbReference type="Rhea" id="RHEA-COMP:10686"/>
        <dbReference type="ChEBI" id="CHEBI:15378"/>
        <dbReference type="ChEBI" id="CHEBI:57692"/>
        <dbReference type="ChEBI" id="CHEBI:58307"/>
        <dbReference type="ChEBI" id="CHEBI:65059"/>
        <dbReference type="ChEBI" id="CHEBI:74692"/>
    </reaction>
</comment>
<comment type="catalytic activity">
    <reaction evidence="4">
        <text>tetracosanoyl-CoA + oxidized [electron-transfer flavoprotein] + H(+) = (2E)-tetracosenoyl-CoA + reduced [electron-transfer flavoprotein]</text>
        <dbReference type="Rhea" id="RHEA:47232"/>
        <dbReference type="Rhea" id="RHEA-COMP:10685"/>
        <dbReference type="Rhea" id="RHEA-COMP:10686"/>
        <dbReference type="ChEBI" id="CHEBI:15378"/>
        <dbReference type="ChEBI" id="CHEBI:57692"/>
        <dbReference type="ChEBI" id="CHEBI:58307"/>
        <dbReference type="ChEBI" id="CHEBI:65052"/>
        <dbReference type="ChEBI" id="CHEBI:74693"/>
    </reaction>
    <physiologicalReaction direction="left-to-right" evidence="8">
        <dbReference type="Rhea" id="RHEA:47233"/>
    </physiologicalReaction>
</comment>
<comment type="cofactor">
    <cofactor evidence="4">
        <name>FAD</name>
        <dbReference type="ChEBI" id="CHEBI:57692"/>
    </cofactor>
</comment>
<comment type="pathway">
    <text evidence="4 5">Lipid metabolism; mitochondrial fatty acid beta-oxidation.</text>
</comment>
<comment type="subunit">
    <text evidence="1 4">Homodimer (PubMed:1730632). Homodimerizes after import into the mitochondrion (By similarity).</text>
</comment>
<comment type="subcellular location">
    <subcellularLocation>
        <location evidence="4 5">Mitochondrion inner membrane</location>
        <topology evidence="1">Peripheral membrane protein</topology>
    </subcellularLocation>
</comment>
<comment type="tissue specificity">
    <text evidence="5">Widely expressed (at protein level).</text>
</comment>
<comment type="PTM">
    <text evidence="2">S-nitrosylation at Cys-237 in liver improves catalytic efficiency.</text>
</comment>
<comment type="similarity">
    <text evidence="7">Belongs to the acyl-CoA dehydrogenase family.</text>
</comment>
<keyword id="KW-0007">Acetylation</keyword>
<keyword id="KW-0903">Direct protein sequencing</keyword>
<keyword id="KW-0274">FAD</keyword>
<keyword id="KW-0276">Fatty acid metabolism</keyword>
<keyword id="KW-0285">Flavoprotein</keyword>
<keyword id="KW-0443">Lipid metabolism</keyword>
<keyword id="KW-0472">Membrane</keyword>
<keyword id="KW-0496">Mitochondrion</keyword>
<keyword id="KW-0999">Mitochondrion inner membrane</keyword>
<keyword id="KW-0560">Oxidoreductase</keyword>
<keyword id="KW-0597">Phosphoprotein</keyword>
<keyword id="KW-1185">Reference proteome</keyword>
<keyword id="KW-0702">S-nitrosylation</keyword>
<keyword id="KW-0809">Transit peptide</keyword>
<evidence type="ECO:0000250" key="1">
    <source>
        <dbReference type="UniProtKB" id="P49748"/>
    </source>
</evidence>
<evidence type="ECO:0000250" key="2">
    <source>
        <dbReference type="UniProtKB" id="P50544"/>
    </source>
</evidence>
<evidence type="ECO:0000256" key="3">
    <source>
        <dbReference type="SAM" id="MobiDB-lite"/>
    </source>
</evidence>
<evidence type="ECO:0000269" key="4">
    <source>
    </source>
</evidence>
<evidence type="ECO:0000269" key="5">
    <source>
    </source>
</evidence>
<evidence type="ECO:0000303" key="6">
    <source>
    </source>
</evidence>
<evidence type="ECO:0000305" key="7"/>
<evidence type="ECO:0000305" key="8">
    <source>
    </source>
</evidence>
<evidence type="ECO:0000312" key="9">
    <source>
        <dbReference type="RGD" id="2014"/>
    </source>
</evidence>
<proteinExistence type="evidence at protein level"/>
<feature type="transit peptide" description="Mitochondrion">
    <location>
        <begin position="1"/>
        <end position="40"/>
    </location>
</feature>
<feature type="chain" id="PRO_0000000518" description="Very long-chain specific acyl-CoA dehydrogenase, mitochondrial">
    <location>
        <begin position="41"/>
        <end position="655"/>
    </location>
</feature>
<feature type="region of interest" description="Disordered" evidence="3">
    <location>
        <begin position="1"/>
        <end position="70"/>
    </location>
</feature>
<feature type="region of interest" description="Catalytic" evidence="1">
    <location>
        <begin position="41"/>
        <end position="482"/>
    </location>
</feature>
<feature type="region of interest" description="Membrane-anchoring" evidence="1">
    <location>
        <begin position="483"/>
        <end position="516"/>
    </location>
</feature>
<feature type="compositionally biased region" description="Polar residues" evidence="3">
    <location>
        <begin position="21"/>
        <end position="37"/>
    </location>
</feature>
<feature type="compositionally biased region" description="Basic and acidic residues" evidence="3">
    <location>
        <begin position="60"/>
        <end position="70"/>
    </location>
</feature>
<feature type="active site" description="Proton acceptor" evidence="1">
    <location>
        <position position="462"/>
    </location>
</feature>
<feature type="binding site" evidence="1">
    <location>
        <begin position="214"/>
        <end position="223"/>
    </location>
    <ligand>
        <name>FAD</name>
        <dbReference type="ChEBI" id="CHEBI:57692"/>
    </ligand>
</feature>
<feature type="binding site" evidence="1">
    <location>
        <begin position="249"/>
        <end position="251"/>
    </location>
    <ligand>
        <name>FAD</name>
        <dbReference type="ChEBI" id="CHEBI:57692"/>
    </ligand>
</feature>
<feature type="binding site" evidence="1">
    <location>
        <begin position="461"/>
        <end position="463"/>
    </location>
    <ligand>
        <name>substrate</name>
    </ligand>
</feature>
<feature type="binding site" evidence="1">
    <location>
        <begin position="464"/>
        <end position="466"/>
    </location>
    <ligand>
        <name>FAD</name>
        <dbReference type="ChEBI" id="CHEBI:57692"/>
    </ligand>
</feature>
<feature type="binding site" evidence="1">
    <location>
        <position position="562"/>
    </location>
    <ligand>
        <name>FAD</name>
        <dbReference type="ChEBI" id="CHEBI:57692"/>
    </ligand>
</feature>
<feature type="modified residue" description="N6-acetyllysine" evidence="2">
    <location>
        <position position="51"/>
    </location>
</feature>
<feature type="modified residue" description="N6-acetyllysine; alternate" evidence="2">
    <location>
        <position position="71"/>
    </location>
</feature>
<feature type="modified residue" description="N6-succinyllysine; alternate" evidence="2">
    <location>
        <position position="71"/>
    </location>
</feature>
<feature type="modified residue" description="N6-acetyllysine; alternate" evidence="2">
    <location>
        <position position="127"/>
    </location>
</feature>
<feature type="modified residue" description="N6-succinyllysine; alternate" evidence="2">
    <location>
        <position position="127"/>
    </location>
</feature>
<feature type="modified residue" description="N6-succinyllysine" evidence="2">
    <location>
        <position position="195"/>
    </location>
</feature>
<feature type="modified residue" description="S-nitrosocysteine" evidence="2">
    <location>
        <position position="237"/>
    </location>
</feature>
<feature type="modified residue" description="N6-acetyllysine; alternate" evidence="1">
    <location>
        <position position="239"/>
    </location>
</feature>
<feature type="modified residue" description="N6-succinyllysine; alternate" evidence="2">
    <location>
        <position position="239"/>
    </location>
</feature>
<feature type="modified residue" description="N6-succinyllysine" evidence="2">
    <location>
        <position position="268"/>
    </location>
</feature>
<feature type="modified residue" description="N6-acetyllysine; alternate" evidence="2">
    <location>
        <position position="276"/>
    </location>
</feature>
<feature type="modified residue" description="N6-succinyllysine; alternate" evidence="2">
    <location>
        <position position="276"/>
    </location>
</feature>
<feature type="modified residue" description="N6-acetyllysine; alternate" evidence="2">
    <location>
        <position position="278"/>
    </location>
</feature>
<feature type="modified residue" description="N6-succinyllysine; alternate" evidence="2">
    <location>
        <position position="278"/>
    </location>
</feature>
<feature type="modified residue" description="N6-acetyllysine" evidence="2">
    <location>
        <position position="298"/>
    </location>
</feature>
<feature type="modified residue" description="N6-acetyllysine" evidence="2">
    <location>
        <position position="316"/>
    </location>
</feature>
<feature type="modified residue" description="N6-acetyllysine; alternate" evidence="1">
    <location>
        <position position="331"/>
    </location>
</feature>
<feature type="modified residue" description="N6-succinyllysine; alternate" evidence="2">
    <location>
        <position position="331"/>
    </location>
</feature>
<feature type="modified residue" description="N6-succinyllysine" evidence="2">
    <location>
        <position position="372"/>
    </location>
</feature>
<feature type="modified residue" description="N6-acetyllysine; alternate" evidence="2">
    <location>
        <position position="482"/>
    </location>
</feature>
<feature type="modified residue" description="N6-succinyllysine; alternate" evidence="2">
    <location>
        <position position="482"/>
    </location>
</feature>
<feature type="modified residue" description="Phosphoserine" evidence="1">
    <location>
        <position position="517"/>
    </location>
</feature>
<feature type="modified residue" description="Phosphoserine" evidence="1">
    <location>
        <position position="522"/>
    </location>
</feature>
<feature type="modified residue" description="N6-acetyllysine" evidence="2">
    <location>
        <position position="550"/>
    </location>
</feature>
<feature type="modified residue" description="N6-acetyllysine; alternate" evidence="2">
    <location>
        <position position="556"/>
    </location>
</feature>
<feature type="modified residue" description="N6-succinyllysine; alternate" evidence="2">
    <location>
        <position position="556"/>
    </location>
</feature>
<feature type="modified residue" description="N6-succinyllysine" evidence="2">
    <location>
        <position position="639"/>
    </location>
</feature>
<name>ACADV_RAT</name>
<protein>
    <recommendedName>
        <fullName evidence="8">Very long-chain specific acyl-CoA dehydrogenase, mitochondrial</fullName>
        <shortName evidence="6">VLCAD</shortName>
        <ecNumber evidence="4 5">1.3.8.9</ecNumber>
    </recommendedName>
</protein>
<gene>
    <name evidence="9" type="primary">Acadvl</name>
</gene>
<reference key="1">
    <citation type="journal article" date="1994" name="J. Biol. Chem.">
        <title>Rat very-long-chain acyl-CoA dehydrogenase, a novel mitochondrial acyl-CoA dehydrogenase gene product, is a rate-limiting enzyme in long-chain fatty acid beta-oxidation system. cDNA and deduced amino acid sequence and distinct specificities of the cDNA-expressed protein.</title>
        <authorList>
            <person name="Aoyama T."/>
            <person name="Ueno I."/>
            <person name="Kamijo T."/>
            <person name="Hashimoto T."/>
        </authorList>
    </citation>
    <scope>NUCLEOTIDE SEQUENCE [MRNA]</scope>
    <scope>PARTIAL PROTEIN SEQUENCE</scope>
    <scope>FUNCTION</scope>
    <scope>CATALYTIC ACTIVITY</scope>
    <scope>PATHWAY</scope>
    <scope>SUBCELLULAR LOCATION</scope>
    <scope>TISSUE SPECIFICITY</scope>
    <source>
        <strain>Wistar</strain>
        <tissue>Liver</tissue>
    </source>
</reference>
<reference key="2">
    <citation type="journal article" date="1992" name="J. Biol. Chem.">
        <title>Novel fatty acid beta-oxidation enzymes in rat liver mitochondria. I. Purification and properties of very-long-chain acyl-coenzyme A dehydrogenase.</title>
        <authorList>
            <person name="Izai K."/>
            <person name="Uchida Y."/>
            <person name="Orii T."/>
            <person name="Yamamoto S."/>
            <person name="Hashimoto T."/>
        </authorList>
    </citation>
    <scope>FUNCTION</scope>
    <scope>CATALYTIC ACTIVITY</scope>
    <scope>COFACTOR</scope>
    <scope>PATHWAY</scope>
    <scope>SUBSTRATE SPECIFICITY</scope>
    <scope>SUBUNIT</scope>
    <scope>SUBCELLULAR LOCATION</scope>
</reference>
<dbReference type="EC" id="1.3.8.9" evidence="4 5"/>
<dbReference type="EMBL" id="D30647">
    <property type="protein sequence ID" value="BAA06331.1"/>
    <property type="molecule type" value="mRNA"/>
</dbReference>
<dbReference type="PIR" id="A54872">
    <property type="entry name" value="A54872"/>
</dbReference>
<dbReference type="RefSeq" id="NP_037023.1">
    <property type="nucleotide sequence ID" value="NM_012891.2"/>
</dbReference>
<dbReference type="SMR" id="P45953"/>
<dbReference type="BioGRID" id="247402">
    <property type="interactions" value="2"/>
</dbReference>
<dbReference type="FunCoup" id="P45953">
    <property type="interactions" value="1914"/>
</dbReference>
<dbReference type="STRING" id="10116.ENSRNOP00000024973"/>
<dbReference type="ChEMBL" id="CHEMBL2176830"/>
<dbReference type="SwissLipids" id="SLP:000001587"/>
<dbReference type="CarbonylDB" id="P45953"/>
<dbReference type="GlyGen" id="P45953">
    <property type="glycosylation" value="2 sites, 1 O-linked glycan (2 sites)"/>
</dbReference>
<dbReference type="iPTMnet" id="P45953"/>
<dbReference type="PhosphoSitePlus" id="P45953"/>
<dbReference type="SwissPalm" id="P45953"/>
<dbReference type="jPOST" id="P45953"/>
<dbReference type="PaxDb" id="10116-ENSRNOP00000024973"/>
<dbReference type="GeneID" id="25363"/>
<dbReference type="KEGG" id="rno:25363"/>
<dbReference type="UCSC" id="RGD:2014">
    <property type="organism name" value="rat"/>
</dbReference>
<dbReference type="AGR" id="RGD:2014"/>
<dbReference type="CTD" id="37"/>
<dbReference type="RGD" id="2014">
    <property type="gene designation" value="Acadvl"/>
</dbReference>
<dbReference type="eggNOG" id="KOG0137">
    <property type="taxonomic scope" value="Eukaryota"/>
</dbReference>
<dbReference type="InParanoid" id="P45953"/>
<dbReference type="OrthoDB" id="2588832at2759"/>
<dbReference type="PhylomeDB" id="P45953"/>
<dbReference type="Reactome" id="R-RNO-77305">
    <property type="pathway name" value="Beta oxidation of palmitoyl-CoA to myristoyl-CoA"/>
</dbReference>
<dbReference type="UniPathway" id="UPA00660"/>
<dbReference type="PRO" id="PR:P45953"/>
<dbReference type="Proteomes" id="UP000002494">
    <property type="component" value="Unplaced"/>
</dbReference>
<dbReference type="GO" id="GO:0005743">
    <property type="term" value="C:mitochondrial inner membrane"/>
    <property type="evidence" value="ECO:0000314"/>
    <property type="project" value="RGD"/>
</dbReference>
<dbReference type="GO" id="GO:0031966">
    <property type="term" value="C:mitochondrial membrane"/>
    <property type="evidence" value="ECO:0000266"/>
    <property type="project" value="RGD"/>
</dbReference>
<dbReference type="GO" id="GO:0042645">
    <property type="term" value="C:mitochondrial nucleoid"/>
    <property type="evidence" value="ECO:0000266"/>
    <property type="project" value="RGD"/>
</dbReference>
<dbReference type="GO" id="GO:0005739">
    <property type="term" value="C:mitochondrion"/>
    <property type="evidence" value="ECO:0000266"/>
    <property type="project" value="RGD"/>
</dbReference>
<dbReference type="GO" id="GO:0003995">
    <property type="term" value="F:acyl-CoA dehydrogenase activity"/>
    <property type="evidence" value="ECO:0000314"/>
    <property type="project" value="RGD"/>
</dbReference>
<dbReference type="GO" id="GO:0000062">
    <property type="term" value="F:fatty-acyl-CoA binding"/>
    <property type="evidence" value="ECO:0000314"/>
    <property type="project" value="RGD"/>
</dbReference>
<dbReference type="GO" id="GO:0050660">
    <property type="term" value="F:flavin adenine dinucleotide binding"/>
    <property type="evidence" value="ECO:0000314"/>
    <property type="project" value="RGD"/>
</dbReference>
<dbReference type="GO" id="GO:0042802">
    <property type="term" value="F:identical protein binding"/>
    <property type="evidence" value="ECO:0000250"/>
    <property type="project" value="UniProtKB"/>
</dbReference>
<dbReference type="GO" id="GO:0004466">
    <property type="term" value="F:long-chain fatty acyl-CoA dehydrogenase activity"/>
    <property type="evidence" value="ECO:0000314"/>
    <property type="project" value="RGD"/>
</dbReference>
<dbReference type="GO" id="GO:0017099">
    <property type="term" value="F:very-long-chain fatty acyl-CoA dehydrogenase activity"/>
    <property type="evidence" value="ECO:0000314"/>
    <property type="project" value="RGD"/>
</dbReference>
<dbReference type="GO" id="GO:0030855">
    <property type="term" value="P:epithelial cell differentiation"/>
    <property type="evidence" value="ECO:0000266"/>
    <property type="project" value="RGD"/>
</dbReference>
<dbReference type="GO" id="GO:0006635">
    <property type="term" value="P:fatty acid beta-oxidation"/>
    <property type="evidence" value="ECO:0000314"/>
    <property type="project" value="RGD"/>
</dbReference>
<dbReference type="GO" id="GO:0033539">
    <property type="term" value="P:fatty acid beta-oxidation using acyl-CoA dehydrogenase"/>
    <property type="evidence" value="ECO:0000250"/>
    <property type="project" value="UniProtKB"/>
</dbReference>
<dbReference type="GO" id="GO:0009062">
    <property type="term" value="P:fatty acid catabolic process"/>
    <property type="evidence" value="ECO:0000266"/>
    <property type="project" value="RGD"/>
</dbReference>
<dbReference type="GO" id="GO:0045717">
    <property type="term" value="P:negative regulation of fatty acid biosynthetic process"/>
    <property type="evidence" value="ECO:0000266"/>
    <property type="project" value="RGD"/>
</dbReference>
<dbReference type="GO" id="GO:0046322">
    <property type="term" value="P:negative regulation of fatty acid oxidation"/>
    <property type="evidence" value="ECO:0000266"/>
    <property type="project" value="RGD"/>
</dbReference>
<dbReference type="GO" id="GO:0090181">
    <property type="term" value="P:regulation of cholesterol metabolic process"/>
    <property type="evidence" value="ECO:0000266"/>
    <property type="project" value="RGD"/>
</dbReference>
<dbReference type="GO" id="GO:0009409">
    <property type="term" value="P:response to cold"/>
    <property type="evidence" value="ECO:0000266"/>
    <property type="project" value="RGD"/>
</dbReference>
<dbReference type="GO" id="GO:0001659">
    <property type="term" value="P:temperature homeostasis"/>
    <property type="evidence" value="ECO:0000266"/>
    <property type="project" value="RGD"/>
</dbReference>
<dbReference type="CDD" id="cd01161">
    <property type="entry name" value="VLCAD"/>
    <property type="match status" value="1"/>
</dbReference>
<dbReference type="FunFam" id="1.20.140.10:FF:000008">
    <property type="entry name" value="acyl-CoA dehydrogenase family member 9, mitochondrial"/>
    <property type="match status" value="1"/>
</dbReference>
<dbReference type="FunFam" id="1.20.140.10:FF:000017">
    <property type="entry name" value="very long-chain specific acyl-CoA dehydrogenase, mitochondrial"/>
    <property type="match status" value="1"/>
</dbReference>
<dbReference type="FunFam" id="2.40.110.10:FF:000006">
    <property type="entry name" value="very long-chain specific acyl-CoA dehydrogenase, mitochondrial"/>
    <property type="match status" value="1"/>
</dbReference>
<dbReference type="FunFam" id="1.10.540.10:FF:000001">
    <property type="entry name" value="Very long-chain-specific acyl-CoA dehydrogenase, mitochondrial"/>
    <property type="match status" value="1"/>
</dbReference>
<dbReference type="Gene3D" id="1.10.540.10">
    <property type="entry name" value="Acyl-CoA dehydrogenase/oxidase, N-terminal domain"/>
    <property type="match status" value="1"/>
</dbReference>
<dbReference type="Gene3D" id="2.40.110.10">
    <property type="entry name" value="Butyryl-CoA Dehydrogenase, subunit A, domain 2"/>
    <property type="match status" value="1"/>
</dbReference>
<dbReference type="Gene3D" id="1.20.140.10">
    <property type="entry name" value="Butyryl-CoA Dehydrogenase, subunit A, domain 3"/>
    <property type="match status" value="2"/>
</dbReference>
<dbReference type="InterPro" id="IPR049448">
    <property type="entry name" value="ACAD9/ACADV-like_C"/>
</dbReference>
<dbReference type="InterPro" id="IPR006089">
    <property type="entry name" value="Acyl-CoA_DH_CS"/>
</dbReference>
<dbReference type="InterPro" id="IPR006091">
    <property type="entry name" value="Acyl-CoA_Oxase/DH_mid-dom"/>
</dbReference>
<dbReference type="InterPro" id="IPR046373">
    <property type="entry name" value="Acyl-CoA_Oxase/DH_mid-dom_sf"/>
</dbReference>
<dbReference type="InterPro" id="IPR036250">
    <property type="entry name" value="AcylCo_DH-like_C"/>
</dbReference>
<dbReference type="InterPro" id="IPR009075">
    <property type="entry name" value="AcylCo_DH/oxidase_C"/>
</dbReference>
<dbReference type="InterPro" id="IPR013786">
    <property type="entry name" value="AcylCoA_DH/ox_N"/>
</dbReference>
<dbReference type="InterPro" id="IPR037069">
    <property type="entry name" value="AcylCoA_DH/ox_N_sf"/>
</dbReference>
<dbReference type="InterPro" id="IPR009100">
    <property type="entry name" value="AcylCoA_DH/oxidase_NM_dom_sf"/>
</dbReference>
<dbReference type="PANTHER" id="PTHR43884">
    <property type="entry name" value="ACYL-COA DEHYDROGENASE"/>
    <property type="match status" value="1"/>
</dbReference>
<dbReference type="PANTHER" id="PTHR43884:SF11">
    <property type="entry name" value="VERY LONG-CHAIN SPECIFIC ACYL-COA DEHYDROGENASE, MITOCHONDRIAL"/>
    <property type="match status" value="1"/>
</dbReference>
<dbReference type="Pfam" id="PF21343">
    <property type="entry name" value="ACAD9-ACADV_C"/>
    <property type="match status" value="1"/>
</dbReference>
<dbReference type="Pfam" id="PF00441">
    <property type="entry name" value="Acyl-CoA_dh_1"/>
    <property type="match status" value="1"/>
</dbReference>
<dbReference type="Pfam" id="PF02770">
    <property type="entry name" value="Acyl-CoA_dh_M"/>
    <property type="match status" value="1"/>
</dbReference>
<dbReference type="Pfam" id="PF02771">
    <property type="entry name" value="Acyl-CoA_dh_N"/>
    <property type="match status" value="1"/>
</dbReference>
<dbReference type="SUPFAM" id="SSF47203">
    <property type="entry name" value="Acyl-CoA dehydrogenase C-terminal domain-like"/>
    <property type="match status" value="1"/>
</dbReference>
<dbReference type="SUPFAM" id="SSF56645">
    <property type="entry name" value="Acyl-CoA dehydrogenase NM domain-like"/>
    <property type="match status" value="1"/>
</dbReference>
<dbReference type="PROSITE" id="PS00072">
    <property type="entry name" value="ACYL_COA_DH_1"/>
    <property type="match status" value="1"/>
</dbReference>
<dbReference type="PROSITE" id="PS00073">
    <property type="entry name" value="ACYL_COA_DH_2"/>
    <property type="match status" value="1"/>
</dbReference>
<accession>P45953</accession>
<organism>
    <name type="scientific">Rattus norvegicus</name>
    <name type="common">Rat</name>
    <dbReference type="NCBI Taxonomy" id="10116"/>
    <lineage>
        <taxon>Eukaryota</taxon>
        <taxon>Metazoa</taxon>
        <taxon>Chordata</taxon>
        <taxon>Craniata</taxon>
        <taxon>Vertebrata</taxon>
        <taxon>Euteleostomi</taxon>
        <taxon>Mammalia</taxon>
        <taxon>Eutheria</taxon>
        <taxon>Euarchontoglires</taxon>
        <taxon>Glires</taxon>
        <taxon>Rodentia</taxon>
        <taxon>Myomorpha</taxon>
        <taxon>Muroidea</taxon>
        <taxon>Muridae</taxon>
        <taxon>Murinae</taxon>
        <taxon>Rattus</taxon>
    </lineage>
</organism>